<comment type="function">
    <text evidence="1">Required for normal levels of the cell wall 1,6-beta-glucan. Involved in a protein folding machinery chaperoning proteins acting in various physiological processes including cell wall synthesis and lysis of autophagic bodies (By similarity).</text>
</comment>
<comment type="subcellular location">
    <subcellularLocation>
        <location evidence="1">Endoplasmic reticulum membrane</location>
        <topology evidence="1">Single-pass type I membrane protein</topology>
    </subcellularLocation>
</comment>
<comment type="similarity">
    <text evidence="4">Belongs to the ROT1 family.</text>
</comment>
<dbReference type="EMBL" id="CH476634">
    <property type="protein sequence ID" value="EDN94091.1"/>
    <property type="molecule type" value="Genomic_DNA"/>
</dbReference>
<dbReference type="RefSeq" id="XP_001589325.1">
    <property type="nucleotide sequence ID" value="XM_001589275.1"/>
</dbReference>
<dbReference type="FunCoup" id="A7EX99">
    <property type="interactions" value="17"/>
</dbReference>
<dbReference type="STRING" id="665079.A7EX99"/>
<dbReference type="GlyCosmos" id="A7EX99">
    <property type="glycosylation" value="2 sites, No reported glycans"/>
</dbReference>
<dbReference type="GeneID" id="5485404"/>
<dbReference type="KEGG" id="ssl:SS1G_09960"/>
<dbReference type="VEuPathDB" id="FungiDB:sscle_01g002830"/>
<dbReference type="InParanoid" id="A7EX99"/>
<dbReference type="OMA" id="IWQHGKY"/>
<dbReference type="OrthoDB" id="5327821at2759"/>
<dbReference type="Proteomes" id="UP000001312">
    <property type="component" value="Unassembled WGS sequence"/>
</dbReference>
<dbReference type="GO" id="GO:0005789">
    <property type="term" value="C:endoplasmic reticulum membrane"/>
    <property type="evidence" value="ECO:0000318"/>
    <property type="project" value="GO_Central"/>
</dbReference>
<dbReference type="GO" id="GO:0051082">
    <property type="term" value="F:unfolded protein binding"/>
    <property type="evidence" value="ECO:0000318"/>
    <property type="project" value="GO_Central"/>
</dbReference>
<dbReference type="GO" id="GO:0006458">
    <property type="term" value="P:'de novo' protein folding"/>
    <property type="evidence" value="ECO:0000318"/>
    <property type="project" value="GO_Central"/>
</dbReference>
<dbReference type="InterPro" id="IPR019623">
    <property type="entry name" value="Rot1"/>
</dbReference>
<dbReference type="PANTHER" id="PTHR28090">
    <property type="entry name" value="PROTEIN ROT1"/>
    <property type="match status" value="1"/>
</dbReference>
<dbReference type="PANTHER" id="PTHR28090:SF1">
    <property type="entry name" value="PROTEIN ROT1"/>
    <property type="match status" value="1"/>
</dbReference>
<dbReference type="Pfam" id="PF10681">
    <property type="entry name" value="Rot1"/>
    <property type="match status" value="1"/>
</dbReference>
<dbReference type="PIRSF" id="PIRSF017290">
    <property type="entry name" value="ROT1_prd"/>
    <property type="match status" value="1"/>
</dbReference>
<name>ROT1_SCLS1</name>
<feature type="signal peptide" evidence="2">
    <location>
        <begin position="1"/>
        <end position="22"/>
    </location>
</feature>
<feature type="chain" id="PRO_0000333417" description="Protein rot1">
    <location>
        <begin position="23"/>
        <end position="264"/>
    </location>
</feature>
<feature type="topological domain" description="Lumenal" evidence="2">
    <location>
        <begin position="23"/>
        <end position="243"/>
    </location>
</feature>
<feature type="transmembrane region" description="Helical" evidence="2">
    <location>
        <begin position="244"/>
        <end position="264"/>
    </location>
</feature>
<feature type="region of interest" description="Disordered" evidence="3">
    <location>
        <begin position="185"/>
        <end position="217"/>
    </location>
</feature>
<feature type="compositionally biased region" description="Low complexity" evidence="3">
    <location>
        <begin position="188"/>
        <end position="197"/>
    </location>
</feature>
<feature type="glycosylation site" description="N-linked (GlcNAc...) asparagine" evidence="2">
    <location>
        <position position="51"/>
    </location>
</feature>
<feature type="glycosylation site" description="N-linked (GlcNAc...) asparagine" evidence="2">
    <location>
        <position position="136"/>
    </location>
</feature>
<accession>A7EX99</accession>
<evidence type="ECO:0000250" key="1"/>
<evidence type="ECO:0000255" key="2"/>
<evidence type="ECO:0000256" key="3">
    <source>
        <dbReference type="SAM" id="MobiDB-lite"/>
    </source>
</evidence>
<evidence type="ECO:0000305" key="4"/>
<proteinExistence type="inferred from homology"/>
<sequence length="264" mass="28902">MAPIVLPTVLIASAYLLSTVSAAPNVDELVGTWSTKSAAVLTGPGFYNPVNDSLLEPTHTGISYSFTADGYYEEAYYRAISNPAKPSCVSSIMQWQHGKFVLNDDGSLSLNPFSVDGRQLESAPCTADTATYTRYNQSETLQKYQVYTDPYTKLTRLDLYQFDGTPVNPMFLAYSPALMLPTETLNPTSSAKSTSSSKMKRWLGGADEPEEPTTSEGYLLPLNKNAKHISRGIEQPSLIHRIDLDLLWWAGVGMTIFGGAAYLL</sequence>
<reference key="1">
    <citation type="journal article" date="2011" name="PLoS Genet.">
        <title>Genomic analysis of the necrotrophic fungal pathogens Sclerotinia sclerotiorum and Botrytis cinerea.</title>
        <authorList>
            <person name="Amselem J."/>
            <person name="Cuomo C.A."/>
            <person name="van Kan J.A.L."/>
            <person name="Viaud M."/>
            <person name="Benito E.P."/>
            <person name="Couloux A."/>
            <person name="Coutinho P.M."/>
            <person name="de Vries R.P."/>
            <person name="Dyer P.S."/>
            <person name="Fillinger S."/>
            <person name="Fournier E."/>
            <person name="Gout L."/>
            <person name="Hahn M."/>
            <person name="Kohn L."/>
            <person name="Lapalu N."/>
            <person name="Plummer K.M."/>
            <person name="Pradier J.-M."/>
            <person name="Quevillon E."/>
            <person name="Sharon A."/>
            <person name="Simon A."/>
            <person name="ten Have A."/>
            <person name="Tudzynski B."/>
            <person name="Tudzynski P."/>
            <person name="Wincker P."/>
            <person name="Andrew M."/>
            <person name="Anthouard V."/>
            <person name="Beever R.E."/>
            <person name="Beffa R."/>
            <person name="Benoit I."/>
            <person name="Bouzid O."/>
            <person name="Brault B."/>
            <person name="Chen Z."/>
            <person name="Choquer M."/>
            <person name="Collemare J."/>
            <person name="Cotton P."/>
            <person name="Danchin E.G."/>
            <person name="Da Silva C."/>
            <person name="Gautier A."/>
            <person name="Giraud C."/>
            <person name="Giraud T."/>
            <person name="Gonzalez C."/>
            <person name="Grossetete S."/>
            <person name="Gueldener U."/>
            <person name="Henrissat B."/>
            <person name="Howlett B.J."/>
            <person name="Kodira C."/>
            <person name="Kretschmer M."/>
            <person name="Lappartient A."/>
            <person name="Leroch M."/>
            <person name="Levis C."/>
            <person name="Mauceli E."/>
            <person name="Neuveglise C."/>
            <person name="Oeser B."/>
            <person name="Pearson M."/>
            <person name="Poulain J."/>
            <person name="Poussereau N."/>
            <person name="Quesneville H."/>
            <person name="Rascle C."/>
            <person name="Schumacher J."/>
            <person name="Segurens B."/>
            <person name="Sexton A."/>
            <person name="Silva E."/>
            <person name="Sirven C."/>
            <person name="Soanes D.M."/>
            <person name="Talbot N.J."/>
            <person name="Templeton M."/>
            <person name="Yandava C."/>
            <person name="Yarden O."/>
            <person name="Zeng Q."/>
            <person name="Rollins J.A."/>
            <person name="Lebrun M.-H."/>
            <person name="Dickman M."/>
        </authorList>
    </citation>
    <scope>NUCLEOTIDE SEQUENCE [LARGE SCALE GENOMIC DNA]</scope>
    <source>
        <strain>ATCC 18683 / 1980 / Ss-1</strain>
    </source>
</reference>
<organism>
    <name type="scientific">Sclerotinia sclerotiorum (strain ATCC 18683 / 1980 / Ss-1)</name>
    <name type="common">White mold</name>
    <name type="synonym">Whetzelinia sclerotiorum</name>
    <dbReference type="NCBI Taxonomy" id="665079"/>
    <lineage>
        <taxon>Eukaryota</taxon>
        <taxon>Fungi</taxon>
        <taxon>Dikarya</taxon>
        <taxon>Ascomycota</taxon>
        <taxon>Pezizomycotina</taxon>
        <taxon>Leotiomycetes</taxon>
        <taxon>Helotiales</taxon>
        <taxon>Sclerotiniaceae</taxon>
        <taxon>Sclerotinia</taxon>
    </lineage>
</organism>
<protein>
    <recommendedName>
        <fullName>Protein rot1</fullName>
    </recommendedName>
</protein>
<keyword id="KW-0256">Endoplasmic reticulum</keyword>
<keyword id="KW-0325">Glycoprotein</keyword>
<keyword id="KW-0472">Membrane</keyword>
<keyword id="KW-1185">Reference proteome</keyword>
<keyword id="KW-0732">Signal</keyword>
<keyword id="KW-0812">Transmembrane</keyword>
<keyword id="KW-1133">Transmembrane helix</keyword>
<gene>
    <name type="primary">rot1</name>
    <name type="ORF">SS1G_09960</name>
</gene>